<proteinExistence type="predicted"/>
<evidence type="ECO:0000255" key="1">
    <source>
        <dbReference type="PROSITE-ProRule" id="PRU00108"/>
    </source>
</evidence>
<evidence type="ECO:0000256" key="2">
    <source>
        <dbReference type="SAM" id="MobiDB-lite"/>
    </source>
</evidence>
<comment type="subcellular location">
    <subcellularLocation>
        <location>Nucleus</location>
    </subcellularLocation>
</comment>
<reference key="1">
    <citation type="journal article" date="2001" name="Nature">
        <title>Genome sequence and gene compaction of the eukaryote parasite Encephalitozoon cuniculi.</title>
        <authorList>
            <person name="Katinka M.D."/>
            <person name="Duprat S."/>
            <person name="Cornillot E."/>
            <person name="Metenier G."/>
            <person name="Thomarat F."/>
            <person name="Prensier G."/>
            <person name="Barbe V."/>
            <person name="Peyretaillade E."/>
            <person name="Brottier P."/>
            <person name="Wincker P."/>
            <person name="Delbac F."/>
            <person name="El Alaoui H."/>
            <person name="Peyret P."/>
            <person name="Saurin W."/>
            <person name="Gouy M."/>
            <person name="Weissenbach J."/>
            <person name="Vivares C.P."/>
        </authorList>
    </citation>
    <scope>NUCLEOTIDE SEQUENCE [LARGE SCALE GENOMIC DNA]</scope>
    <source>
        <strain>GB-M1</strain>
    </source>
</reference>
<reference key="2">
    <citation type="journal article" date="2003" name="Dev. Genes Evol.">
        <title>The homeobox genes of Encephalitozoon cuniculi (Microsporidia) reveal a putative mating-type locus.</title>
        <authorList>
            <person name="Buerglin T.R."/>
        </authorList>
    </citation>
    <scope>DISCUSSION OF SEQUENCE</scope>
</reference>
<name>HD10_ENCCU</name>
<sequence length="227" mass="26688">MDNFGGNFFNSYSNNSNREVEGNQYFDPYFVKHRKRTTKAQLKVLEETFETNIRPDANMRKKLGEQLGMTPRSVQVWFQNRRAKIKKLTQKKMMQQENTDNTKGPDAAHGSSSPKECKYNSYYPYIPIQGPLEEFNVYPRDNSIYKHGMPQGMASPIMYEGFGYRGHEEYGYPYVQRYGGGEYYQMQYPYGMVQAQWHQPPGFRDDDYYHSARKQQYRGGAPNSEKM</sequence>
<organism>
    <name type="scientific">Encephalitozoon cuniculi (strain GB-M1)</name>
    <name type="common">Microsporidian parasite</name>
    <dbReference type="NCBI Taxonomy" id="284813"/>
    <lineage>
        <taxon>Eukaryota</taxon>
        <taxon>Fungi</taxon>
        <taxon>Fungi incertae sedis</taxon>
        <taxon>Microsporidia</taxon>
        <taxon>Unikaryonidae</taxon>
        <taxon>Encephalitozoon</taxon>
    </lineage>
</organism>
<protein>
    <recommendedName>
        <fullName>Homeobox protein HD-10</fullName>
    </recommendedName>
    <alternativeName>
        <fullName>EcHD-10</fullName>
    </alternativeName>
</protein>
<keyword id="KW-0238">DNA-binding</keyword>
<keyword id="KW-0371">Homeobox</keyword>
<keyword id="KW-0539">Nucleus</keyword>
<keyword id="KW-1185">Reference proteome</keyword>
<gene>
    <name type="primary">HD-10</name>
    <name type="ordered locus">ECU03_1170</name>
</gene>
<accession>Q8SW18</accession>
<accession>Q7SI88</accession>
<feature type="chain" id="PRO_0000048919" description="Homeobox protein HD-10">
    <location>
        <begin position="1"/>
        <end position="227"/>
    </location>
</feature>
<feature type="DNA-binding region" description="Homeobox" evidence="1">
    <location>
        <begin position="30"/>
        <end position="89"/>
    </location>
</feature>
<feature type="region of interest" description="Disordered" evidence="2">
    <location>
        <begin position="88"/>
        <end position="115"/>
    </location>
</feature>
<feature type="compositionally biased region" description="Polar residues" evidence="2">
    <location>
        <begin position="92"/>
        <end position="102"/>
    </location>
</feature>
<dbReference type="EMBL" id="AL590443">
    <property type="protein sequence ID" value="CAD26261.1"/>
    <property type="molecule type" value="Genomic_DNA"/>
</dbReference>
<dbReference type="EMBL" id="BK001341">
    <property type="protein sequence ID" value="DAA01304.1"/>
    <property type="molecule type" value="Genomic_DNA"/>
</dbReference>
<dbReference type="RefSeq" id="NP_597626.1">
    <property type="nucleotide sequence ID" value="NM_001040990.1"/>
</dbReference>
<dbReference type="SMR" id="Q8SW18"/>
<dbReference type="STRING" id="284813.Q8SW18"/>
<dbReference type="GeneID" id="858788"/>
<dbReference type="KEGG" id="ecu:ECU03_1170"/>
<dbReference type="VEuPathDB" id="MicrosporidiaDB:ECU03_1170"/>
<dbReference type="HOGENOM" id="CLU_106359_0_0_1"/>
<dbReference type="InParanoid" id="Q8SW18"/>
<dbReference type="OrthoDB" id="6159439at2759"/>
<dbReference type="Proteomes" id="UP000000819">
    <property type="component" value="Chromosome III"/>
</dbReference>
<dbReference type="GO" id="GO:0005634">
    <property type="term" value="C:nucleus"/>
    <property type="evidence" value="ECO:0007669"/>
    <property type="project" value="UniProtKB-SubCell"/>
</dbReference>
<dbReference type="GO" id="GO:0000978">
    <property type="term" value="F:RNA polymerase II cis-regulatory region sequence-specific DNA binding"/>
    <property type="evidence" value="ECO:0007669"/>
    <property type="project" value="TreeGrafter"/>
</dbReference>
<dbReference type="GO" id="GO:0030154">
    <property type="term" value="P:cell differentiation"/>
    <property type="evidence" value="ECO:0007669"/>
    <property type="project" value="TreeGrafter"/>
</dbReference>
<dbReference type="GO" id="GO:0006357">
    <property type="term" value="P:regulation of transcription by RNA polymerase II"/>
    <property type="evidence" value="ECO:0007669"/>
    <property type="project" value="TreeGrafter"/>
</dbReference>
<dbReference type="CDD" id="cd00086">
    <property type="entry name" value="homeodomain"/>
    <property type="match status" value="1"/>
</dbReference>
<dbReference type="Gene3D" id="1.10.10.60">
    <property type="entry name" value="Homeodomain-like"/>
    <property type="match status" value="1"/>
</dbReference>
<dbReference type="InterPro" id="IPR001356">
    <property type="entry name" value="HD"/>
</dbReference>
<dbReference type="InterPro" id="IPR051000">
    <property type="entry name" value="Homeobox_DNA-bind_prot"/>
</dbReference>
<dbReference type="InterPro" id="IPR009057">
    <property type="entry name" value="Homeodomain-like_sf"/>
</dbReference>
<dbReference type="PANTHER" id="PTHR24324:SF9">
    <property type="entry name" value="HOMEOBOX DOMAIN-CONTAINING PROTEIN"/>
    <property type="match status" value="1"/>
</dbReference>
<dbReference type="PANTHER" id="PTHR24324">
    <property type="entry name" value="HOMEOBOX PROTEIN HHEX"/>
    <property type="match status" value="1"/>
</dbReference>
<dbReference type="Pfam" id="PF00046">
    <property type="entry name" value="Homeodomain"/>
    <property type="match status" value="1"/>
</dbReference>
<dbReference type="SMART" id="SM00389">
    <property type="entry name" value="HOX"/>
    <property type="match status" value="1"/>
</dbReference>
<dbReference type="SUPFAM" id="SSF46689">
    <property type="entry name" value="Homeodomain-like"/>
    <property type="match status" value="1"/>
</dbReference>
<dbReference type="PROSITE" id="PS50071">
    <property type="entry name" value="HOMEOBOX_2"/>
    <property type="match status" value="1"/>
</dbReference>